<name>VPC_HAEIN</name>
<organism>
    <name type="scientific">Haemophilus influenzae (strain ATCC 51907 / DSM 11121 / KW20 / Rd)</name>
    <dbReference type="NCBI Taxonomy" id="71421"/>
    <lineage>
        <taxon>Bacteria</taxon>
        <taxon>Pseudomonadati</taxon>
        <taxon>Pseudomonadota</taxon>
        <taxon>Gammaproteobacteria</taxon>
        <taxon>Pasteurellales</taxon>
        <taxon>Pasteurellaceae</taxon>
        <taxon>Haemophilus</taxon>
    </lineage>
</organism>
<sequence length="72" mass="8558">MAHYFGGKSFYLPAGDKIKEALRDAQIYQEFNGKNVPDLIKKYRLSESTIYAILRNQRTLQRKRHQMDFNFS</sequence>
<proteinExistence type="inferred from homology"/>
<reference key="1">
    <citation type="journal article" date="1995" name="Science">
        <title>Whole-genome random sequencing and assembly of Haemophilus influenzae Rd.</title>
        <authorList>
            <person name="Fleischmann R.D."/>
            <person name="Adams M.D."/>
            <person name="White O."/>
            <person name="Clayton R.A."/>
            <person name="Kirkness E.F."/>
            <person name="Kerlavage A.R."/>
            <person name="Bult C.J."/>
            <person name="Tomb J.-F."/>
            <person name="Dougherty B.A."/>
            <person name="Merrick J.M."/>
            <person name="McKenney K."/>
            <person name="Sutton G.G."/>
            <person name="FitzHugh W."/>
            <person name="Fields C.A."/>
            <person name="Gocayne J.D."/>
            <person name="Scott J.D."/>
            <person name="Shirley R."/>
            <person name="Liu L.-I."/>
            <person name="Glodek A."/>
            <person name="Kelley J.M."/>
            <person name="Weidman J.F."/>
            <person name="Phillips C.A."/>
            <person name="Spriggs T."/>
            <person name="Hedblom E."/>
            <person name="Cotton M.D."/>
            <person name="Utterback T.R."/>
            <person name="Hanna M.C."/>
            <person name="Nguyen D.T."/>
            <person name="Saudek D.M."/>
            <person name="Brandon R.C."/>
            <person name="Fine L.D."/>
            <person name="Fritchman J.L."/>
            <person name="Fuhrmann J.L."/>
            <person name="Geoghagen N.S.M."/>
            <person name="Gnehm C.L."/>
            <person name="McDonald L.A."/>
            <person name="Small K.V."/>
            <person name="Fraser C.M."/>
            <person name="Smith H.O."/>
            <person name="Venter J.C."/>
        </authorList>
    </citation>
    <scope>NUCLEOTIDE SEQUENCE [LARGE SCALE GENOMIC DNA]</scope>
    <source>
        <strain>ATCC 51907 / DSM 11121 / KW20 / Rd</strain>
    </source>
</reference>
<accession>P71388</accession>
<feature type="chain" id="PRO_0000062805" description="Mu-like prophage FluMu protein C">
    <location>
        <begin position="1"/>
        <end position="72"/>
    </location>
</feature>
<feature type="DNA-binding region" description="H-T-H motif" evidence="1">
    <location>
        <begin position="35"/>
        <end position="55"/>
    </location>
</feature>
<dbReference type="EMBL" id="L42023">
    <property type="protein sequence ID" value="AAC23135.1"/>
    <property type="molecule type" value="Genomic_DNA"/>
</dbReference>
<dbReference type="SMR" id="P71388"/>
<dbReference type="STRING" id="71421.HI_1491"/>
<dbReference type="EnsemblBacteria" id="AAC23135">
    <property type="protein sequence ID" value="AAC23135"/>
    <property type="gene ID" value="HI_1491"/>
</dbReference>
<dbReference type="KEGG" id="hin:HI_1491"/>
<dbReference type="eggNOG" id="COG5566">
    <property type="taxonomic scope" value="Bacteria"/>
</dbReference>
<dbReference type="HOGENOM" id="CLU_2716780_0_0_6"/>
<dbReference type="PhylomeDB" id="P71388"/>
<dbReference type="Proteomes" id="UP000000579">
    <property type="component" value="Chromosome"/>
</dbReference>
<dbReference type="GO" id="GO:0003677">
    <property type="term" value="F:DNA binding"/>
    <property type="evidence" value="ECO:0007669"/>
    <property type="project" value="UniProtKB-KW"/>
</dbReference>
<dbReference type="Gene3D" id="1.10.10.60">
    <property type="entry name" value="Homeodomain-like"/>
    <property type="match status" value="1"/>
</dbReference>
<dbReference type="InterPro" id="IPR052411">
    <property type="entry name" value="c-mor_Regulatory_Protein"/>
</dbReference>
<dbReference type="InterPro" id="IPR009057">
    <property type="entry name" value="Homeodomain-like_sf"/>
</dbReference>
<dbReference type="InterPro" id="IPR014875">
    <property type="entry name" value="Mor_transcription_activator"/>
</dbReference>
<dbReference type="PANTHER" id="PTHR37812">
    <property type="entry name" value="MU-LIKE PROPHAGE FLUMU PROTEIN C"/>
    <property type="match status" value="1"/>
</dbReference>
<dbReference type="PANTHER" id="PTHR37812:SF1">
    <property type="entry name" value="MU-LIKE PROPHAGE FLUMU PROTEIN C"/>
    <property type="match status" value="1"/>
</dbReference>
<dbReference type="Pfam" id="PF08765">
    <property type="entry name" value="Mor"/>
    <property type="match status" value="1"/>
</dbReference>
<dbReference type="SUPFAM" id="SSF46689">
    <property type="entry name" value="Homeodomain-like"/>
    <property type="match status" value="1"/>
</dbReference>
<comment type="function">
    <text evidence="1">Required for transcription of the phage late genes.</text>
</comment>
<comment type="similarity">
    <text evidence="2">Belongs to the c/mor transcriptional regulatory family.</text>
</comment>
<protein>
    <recommendedName>
        <fullName>Mu-like prophage FluMu protein C</fullName>
    </recommendedName>
</protein>
<evidence type="ECO:0000250" key="1"/>
<evidence type="ECO:0000305" key="2"/>
<keyword id="KW-0238">DNA-binding</keyword>
<keyword id="KW-1185">Reference proteome</keyword>
<keyword id="KW-0804">Transcription</keyword>
<keyword id="KW-0805">Transcription regulation</keyword>
<gene>
    <name type="ordered locus">HI_1491</name>
</gene>